<feature type="chain" id="PRO_0000224088" description="DNA-directed RNA polymerase subunit beta">
    <location>
        <begin position="1"/>
        <end position="1363"/>
    </location>
</feature>
<organism>
    <name type="scientific">Pelagibacter ubique (strain HTCC1062)</name>
    <dbReference type="NCBI Taxonomy" id="335992"/>
    <lineage>
        <taxon>Bacteria</taxon>
        <taxon>Pseudomonadati</taxon>
        <taxon>Pseudomonadota</taxon>
        <taxon>Alphaproteobacteria</taxon>
        <taxon>Candidatus Pelagibacterales</taxon>
        <taxon>Candidatus Pelagibacteraceae</taxon>
        <taxon>Candidatus Pelagibacter</taxon>
    </lineage>
</organism>
<dbReference type="EC" id="2.7.7.6" evidence="1"/>
<dbReference type="EMBL" id="CP000084">
    <property type="protein sequence ID" value="AAZ21926.1"/>
    <property type="molecule type" value="Genomic_DNA"/>
</dbReference>
<dbReference type="RefSeq" id="WP_011282159.1">
    <property type="nucleotide sequence ID" value="NC_007205.1"/>
</dbReference>
<dbReference type="SMR" id="Q4FLL2"/>
<dbReference type="STRING" id="335992.SAR11_1123"/>
<dbReference type="GeneID" id="66295612"/>
<dbReference type="KEGG" id="pub:SAR11_1123"/>
<dbReference type="eggNOG" id="COG0085">
    <property type="taxonomic scope" value="Bacteria"/>
</dbReference>
<dbReference type="HOGENOM" id="CLU_000524_4_0_5"/>
<dbReference type="OrthoDB" id="9803954at2"/>
<dbReference type="Proteomes" id="UP000002528">
    <property type="component" value="Chromosome"/>
</dbReference>
<dbReference type="GO" id="GO:0000428">
    <property type="term" value="C:DNA-directed RNA polymerase complex"/>
    <property type="evidence" value="ECO:0007669"/>
    <property type="project" value="UniProtKB-KW"/>
</dbReference>
<dbReference type="GO" id="GO:0003677">
    <property type="term" value="F:DNA binding"/>
    <property type="evidence" value="ECO:0007669"/>
    <property type="project" value="UniProtKB-UniRule"/>
</dbReference>
<dbReference type="GO" id="GO:0003899">
    <property type="term" value="F:DNA-directed RNA polymerase activity"/>
    <property type="evidence" value="ECO:0007669"/>
    <property type="project" value="UniProtKB-UniRule"/>
</dbReference>
<dbReference type="GO" id="GO:0032549">
    <property type="term" value="F:ribonucleoside binding"/>
    <property type="evidence" value="ECO:0007669"/>
    <property type="project" value="InterPro"/>
</dbReference>
<dbReference type="GO" id="GO:0006351">
    <property type="term" value="P:DNA-templated transcription"/>
    <property type="evidence" value="ECO:0007669"/>
    <property type="project" value="UniProtKB-UniRule"/>
</dbReference>
<dbReference type="CDD" id="cd00653">
    <property type="entry name" value="RNA_pol_B_RPB2"/>
    <property type="match status" value="1"/>
</dbReference>
<dbReference type="FunFam" id="2.40.50.100:FF:000006">
    <property type="entry name" value="DNA-directed RNA polymerase subunit beta"/>
    <property type="match status" value="1"/>
</dbReference>
<dbReference type="FunFam" id="3.90.1800.10:FF:000001">
    <property type="entry name" value="DNA-directed RNA polymerase subunit beta"/>
    <property type="match status" value="1"/>
</dbReference>
<dbReference type="Gene3D" id="2.40.50.100">
    <property type="match status" value="1"/>
</dbReference>
<dbReference type="Gene3D" id="2.40.50.150">
    <property type="match status" value="1"/>
</dbReference>
<dbReference type="Gene3D" id="3.90.1100.10">
    <property type="match status" value="2"/>
</dbReference>
<dbReference type="Gene3D" id="2.30.150.10">
    <property type="entry name" value="DNA-directed RNA polymerase, beta subunit, external 1 domain"/>
    <property type="match status" value="1"/>
</dbReference>
<dbReference type="Gene3D" id="2.40.270.10">
    <property type="entry name" value="DNA-directed RNA polymerase, subunit 2, domain 6"/>
    <property type="match status" value="2"/>
</dbReference>
<dbReference type="Gene3D" id="3.90.1800.10">
    <property type="entry name" value="RNA polymerase alpha subunit dimerisation domain"/>
    <property type="match status" value="1"/>
</dbReference>
<dbReference type="Gene3D" id="3.90.1110.10">
    <property type="entry name" value="RNA polymerase Rpb2, domain 2"/>
    <property type="match status" value="2"/>
</dbReference>
<dbReference type="HAMAP" id="MF_01321">
    <property type="entry name" value="RNApol_bact_RpoB"/>
    <property type="match status" value="1"/>
</dbReference>
<dbReference type="InterPro" id="IPR042107">
    <property type="entry name" value="DNA-dir_RNA_pol_bsu_ext_1_sf"/>
</dbReference>
<dbReference type="InterPro" id="IPR019462">
    <property type="entry name" value="DNA-dir_RNA_pol_bsu_external_1"/>
</dbReference>
<dbReference type="InterPro" id="IPR015712">
    <property type="entry name" value="DNA-dir_RNA_pol_su2"/>
</dbReference>
<dbReference type="InterPro" id="IPR007120">
    <property type="entry name" value="DNA-dir_RNAP_su2_dom"/>
</dbReference>
<dbReference type="InterPro" id="IPR037033">
    <property type="entry name" value="DNA-dir_RNAP_su2_hyb_sf"/>
</dbReference>
<dbReference type="InterPro" id="IPR010243">
    <property type="entry name" value="RNA_pol_bsu_bac"/>
</dbReference>
<dbReference type="InterPro" id="IPR007121">
    <property type="entry name" value="RNA_pol_bsu_CS"/>
</dbReference>
<dbReference type="InterPro" id="IPR007644">
    <property type="entry name" value="RNA_pol_bsu_protrusion"/>
</dbReference>
<dbReference type="InterPro" id="IPR007642">
    <property type="entry name" value="RNA_pol_Rpb2_2"/>
</dbReference>
<dbReference type="InterPro" id="IPR037034">
    <property type="entry name" value="RNA_pol_Rpb2_2_sf"/>
</dbReference>
<dbReference type="InterPro" id="IPR007645">
    <property type="entry name" value="RNA_pol_Rpb2_3"/>
</dbReference>
<dbReference type="InterPro" id="IPR007641">
    <property type="entry name" value="RNA_pol_Rpb2_7"/>
</dbReference>
<dbReference type="InterPro" id="IPR014724">
    <property type="entry name" value="RNA_pol_RPB2_OB-fold"/>
</dbReference>
<dbReference type="NCBIfam" id="NF001616">
    <property type="entry name" value="PRK00405.1"/>
    <property type="match status" value="1"/>
</dbReference>
<dbReference type="NCBIfam" id="TIGR02013">
    <property type="entry name" value="rpoB"/>
    <property type="match status" value="1"/>
</dbReference>
<dbReference type="PANTHER" id="PTHR20856">
    <property type="entry name" value="DNA-DIRECTED RNA POLYMERASE I SUBUNIT 2"/>
    <property type="match status" value="1"/>
</dbReference>
<dbReference type="Pfam" id="PF04563">
    <property type="entry name" value="RNA_pol_Rpb2_1"/>
    <property type="match status" value="1"/>
</dbReference>
<dbReference type="Pfam" id="PF04561">
    <property type="entry name" value="RNA_pol_Rpb2_2"/>
    <property type="match status" value="1"/>
</dbReference>
<dbReference type="Pfam" id="PF04565">
    <property type="entry name" value="RNA_pol_Rpb2_3"/>
    <property type="match status" value="1"/>
</dbReference>
<dbReference type="Pfam" id="PF10385">
    <property type="entry name" value="RNA_pol_Rpb2_45"/>
    <property type="match status" value="1"/>
</dbReference>
<dbReference type="Pfam" id="PF00562">
    <property type="entry name" value="RNA_pol_Rpb2_6"/>
    <property type="match status" value="1"/>
</dbReference>
<dbReference type="Pfam" id="PF04560">
    <property type="entry name" value="RNA_pol_Rpb2_7"/>
    <property type="match status" value="1"/>
</dbReference>
<dbReference type="SUPFAM" id="SSF64484">
    <property type="entry name" value="beta and beta-prime subunits of DNA dependent RNA-polymerase"/>
    <property type="match status" value="1"/>
</dbReference>
<dbReference type="PROSITE" id="PS01166">
    <property type="entry name" value="RNA_POL_BETA"/>
    <property type="match status" value="1"/>
</dbReference>
<protein>
    <recommendedName>
        <fullName evidence="1">DNA-directed RNA polymerase subunit beta</fullName>
        <shortName evidence="1">RNAP subunit beta</shortName>
        <ecNumber evidence="1">2.7.7.6</ecNumber>
    </recommendedName>
    <alternativeName>
        <fullName evidence="1">RNA polymerase subunit beta</fullName>
    </alternativeName>
    <alternativeName>
        <fullName evidence="1">Transcriptase subunit beta</fullName>
    </alternativeName>
</protein>
<name>RPOB_PELUB</name>
<comment type="function">
    <text evidence="1">DNA-dependent RNA polymerase catalyzes the transcription of DNA into RNA using the four ribonucleoside triphosphates as substrates.</text>
</comment>
<comment type="catalytic activity">
    <reaction evidence="1">
        <text>RNA(n) + a ribonucleoside 5'-triphosphate = RNA(n+1) + diphosphate</text>
        <dbReference type="Rhea" id="RHEA:21248"/>
        <dbReference type="Rhea" id="RHEA-COMP:14527"/>
        <dbReference type="Rhea" id="RHEA-COMP:17342"/>
        <dbReference type="ChEBI" id="CHEBI:33019"/>
        <dbReference type="ChEBI" id="CHEBI:61557"/>
        <dbReference type="ChEBI" id="CHEBI:140395"/>
        <dbReference type="EC" id="2.7.7.6"/>
    </reaction>
</comment>
<comment type="subunit">
    <text evidence="1">The RNAP catalytic core consists of 2 alpha, 1 beta, 1 beta' and 1 omega subunit. When a sigma factor is associated with the core the holoenzyme is formed, which can initiate transcription.</text>
</comment>
<comment type="similarity">
    <text evidence="1">Belongs to the RNA polymerase beta chain family.</text>
</comment>
<sequence>MQLSFTQKKNVRKSFGKLAETLSIPNLIEVQKNSYKQLTDFDSEAGDLSKGFDRVFKSIFPIEDLNDKATLEYVSYRLEKPKFDTEECIQRGLSFTSALKCTLRLVVYEIDQENNTKDILSAKEQEVYMGEVPMMTDSGTFITNGVQRVVVNQMHRSPGVFFDHDKGKSHASGKLLFNCRVIPNRGSWLDLEYDVKDFLYFKIDRKKKIFASTLLMALGLTKSEIADEFYDKDTYSFDAKTGKWKTKFNPENYKAKNFSEEVTDAKTGNVVIKLGDKINFLTAKKLASDGLKDILVSQESLIGKYLHNEVKVSDDEEEGTFGIGTELNDTIIKQILEANISSIEISITNSINKGPYLLTTILNDKNNSKNDAITEIYKVLRPGEPPTVEIATQIFNNLFFSSDRYDLSDVGRVKMNSRLNLECSDKITILRNDDIIAIVHKMLDLRDGKDEVDDIDHLGNRRVRSVGELVENQARIGVYRMERAIKEKMTTLDIESAMPQDLINAKPLTVSLKDFFVSSQLSQFMDQTNPLSEITHKRRVSALGPGGLTRERAGFEVRDVHPTHYGRICPIETPEGPNIGLINSLSTYAKINKYGFIESPYKKVLNGIVQDKVEYLSAMEETKYTIAQANAKIDKSGKILEELVPCRENLNFVLSNPSKIDYIDVSPKQLVSVAASLIPFLENDDANRALMGSNMMRQAVPLLKPESPLVGTGIESDVALDSGVTIVASRDGTVDKIDGKRIVIKATEETDFTKSGVDIYNLQKFKRSNQNTCINQKPLVRVGDKVKSGDIIADGPSTKLGELALGKNVTVAFMPWQGYNFEDSILISERCVTDDVFTSVHIVEYEVMARDTKLGEEEITRDIPNVNEEALKNLDESGIVYIGAEVKAGDILVGKVTPKGDSASGPEEKLLRSIFGEKAIDVTDTSLKMSRGSSGTVVDVRVFNRHGIEKDERSITIERAEIDTVQQDKIVEEEILERSIKQRANQILSGASLTKKIKDLDEGTKLDLEIINKININDVFKITVGNVNDEASIAQLKDQYNQAKQDIQERFEDKVLKIRSGDDLLPSVMKMVKVFVAIKRRLRPGDKMSGRHGNKGVVSKIVPVEDMPYREDGRPVDIVLNPLGVPSRMNVGQILETHLGWACKEFGEEVKRLVNENNKKFEKTEKISSFLKSVYGKEVFDGGIEKLNKTEFSDLCENLQNGIAISTPVFDGAKEKDVSEMLELAKLPTSGQTNLWDGRTGEMFDRPVTVGIIYMLKLHHLVEDKIHARSTGPYSLVTQQPLGGKAQLGGQRFGEMEVWALEAYGASYTLQEILTVKSDDVAGRVKVYETIVKGEENFESGIPESFNVLVKEIKSLALNIELN</sequence>
<proteinExistence type="inferred from homology"/>
<keyword id="KW-0240">DNA-directed RNA polymerase</keyword>
<keyword id="KW-0548">Nucleotidyltransferase</keyword>
<keyword id="KW-1185">Reference proteome</keyword>
<keyword id="KW-0804">Transcription</keyword>
<keyword id="KW-0808">Transferase</keyword>
<evidence type="ECO:0000255" key="1">
    <source>
        <dbReference type="HAMAP-Rule" id="MF_01321"/>
    </source>
</evidence>
<reference key="1">
    <citation type="journal article" date="2005" name="Science">
        <title>Genome streamlining in a cosmopolitan oceanic bacterium.</title>
        <authorList>
            <person name="Giovannoni S.J."/>
            <person name="Tripp H.J."/>
            <person name="Givan S."/>
            <person name="Podar M."/>
            <person name="Vergin K.L."/>
            <person name="Baptista D."/>
            <person name="Bibbs L."/>
            <person name="Eads J."/>
            <person name="Richardson T.H."/>
            <person name="Noordewier M."/>
            <person name="Rappe M.S."/>
            <person name="Short J.M."/>
            <person name="Carrington J.C."/>
            <person name="Mathur E.J."/>
        </authorList>
    </citation>
    <scope>NUCLEOTIDE SEQUENCE [LARGE SCALE GENOMIC DNA]</scope>
    <source>
        <strain>HTCC1062</strain>
    </source>
</reference>
<gene>
    <name evidence="1" type="primary">rpoB</name>
    <name type="ordered locus">SAR11_1123</name>
</gene>
<accession>Q4FLL2</accession>